<reference key="1">
    <citation type="journal article" date="2000" name="J. Mammal. Evol.">
        <title>Intergeneric relationships among Macropodoidea (Metatheria: Diprotodontia) and the chronicle of kangaroo evolution.</title>
        <authorList>
            <person name="Burk A."/>
            <person name="Springer M.S."/>
        </authorList>
    </citation>
    <scope>NUCLEOTIDE SEQUENCE [GENOMIC DNA]</scope>
</reference>
<evidence type="ECO:0000256" key="1">
    <source>
        <dbReference type="SAM" id="MobiDB-lite"/>
    </source>
</evidence>
<evidence type="ECO:0000305" key="2"/>
<dbReference type="EMBL" id="AF187537">
    <property type="protein sequence ID" value="AAG27954.1"/>
    <property type="molecule type" value="Genomic_DNA"/>
</dbReference>
<dbReference type="GO" id="GO:0000786">
    <property type="term" value="C:nucleosome"/>
    <property type="evidence" value="ECO:0007669"/>
    <property type="project" value="UniProtKB-KW"/>
</dbReference>
<dbReference type="GO" id="GO:0005634">
    <property type="term" value="C:nucleus"/>
    <property type="evidence" value="ECO:0007669"/>
    <property type="project" value="UniProtKB-SubCell"/>
</dbReference>
<dbReference type="GO" id="GO:0003677">
    <property type="term" value="F:DNA binding"/>
    <property type="evidence" value="ECO:0007669"/>
    <property type="project" value="UniProtKB-KW"/>
</dbReference>
<dbReference type="GO" id="GO:0030261">
    <property type="term" value="P:chromosome condensation"/>
    <property type="evidence" value="ECO:0007669"/>
    <property type="project" value="UniProtKB-KW"/>
</dbReference>
<dbReference type="GO" id="GO:0035092">
    <property type="term" value="P:sperm DNA condensation"/>
    <property type="evidence" value="ECO:0007669"/>
    <property type="project" value="InterPro"/>
</dbReference>
<dbReference type="InterPro" id="IPR000221">
    <property type="entry name" value="Protamine_P1"/>
</dbReference>
<dbReference type="PROSITE" id="PS00048">
    <property type="entry name" value="PROTAMINE_P1"/>
    <property type="match status" value="1"/>
</dbReference>
<sequence length="61" mass="8546">MARYRHSRSRSRSRYRRRRRRRSRYRSRRRRYRGRRRRRSRRGRRRGYSRRRYSRRRRRRY</sequence>
<keyword id="KW-0158">Chromosome</keyword>
<keyword id="KW-0217">Developmental protein</keyword>
<keyword id="KW-0221">Differentiation</keyword>
<keyword id="KW-0226">DNA condensation</keyword>
<keyword id="KW-0238">DNA-binding</keyword>
<keyword id="KW-0544">Nucleosome core</keyword>
<keyword id="KW-0539">Nucleus</keyword>
<keyword id="KW-0744">Spermatogenesis</keyword>
<organism>
    <name type="scientific">Dendrolagus goodfellowi</name>
    <name type="common">Goodfellow's tree-kangaroo</name>
    <dbReference type="NCBI Taxonomy" id="69260"/>
    <lineage>
        <taxon>Eukaryota</taxon>
        <taxon>Metazoa</taxon>
        <taxon>Chordata</taxon>
        <taxon>Craniata</taxon>
        <taxon>Vertebrata</taxon>
        <taxon>Euteleostomi</taxon>
        <taxon>Mammalia</taxon>
        <taxon>Metatheria</taxon>
        <taxon>Diprotodontia</taxon>
        <taxon>Macropodidae</taxon>
        <taxon>Dendrolagus</taxon>
    </lineage>
</organism>
<protein>
    <recommendedName>
        <fullName>Sperm protamine P1</fullName>
    </recommendedName>
</protein>
<proteinExistence type="evidence at transcript level"/>
<gene>
    <name type="primary">PRM1</name>
</gene>
<name>HSP1_DENGO</name>
<feature type="chain" id="PRO_0000191469" description="Sperm protamine P1">
    <location>
        <begin position="1"/>
        <end position="61"/>
    </location>
</feature>
<feature type="region of interest" description="Disordered" evidence="1">
    <location>
        <begin position="1"/>
        <end position="61"/>
    </location>
</feature>
<comment type="function">
    <text>Protamines substitute for histones in the chromatin of sperm during the haploid phase of spermatogenesis. They compact sperm DNA into a highly condensed, stable and inactive complex.</text>
</comment>
<comment type="subcellular location">
    <subcellularLocation>
        <location>Nucleus</location>
    </subcellularLocation>
    <subcellularLocation>
        <location>Chromosome</location>
    </subcellularLocation>
</comment>
<comment type="tissue specificity">
    <text>Testis.</text>
</comment>
<comment type="similarity">
    <text evidence="2">Belongs to the protamine P1 family.</text>
</comment>
<accession>P67838</accession>
<accession>Q9GJQ1</accession>